<gene>
    <name type="primary">DPH3</name>
    <name type="ORF">UMAG_03601</name>
</gene>
<proteinExistence type="inferred from homology"/>
<protein>
    <recommendedName>
        <fullName>Diphthamide biosynthesis protein 3</fullName>
    </recommendedName>
</protein>
<accession>Q4P8G2</accession>
<accession>A0A0D1CPJ5</accession>
<name>DPH3_MYCMD</name>
<dbReference type="EMBL" id="CM003148">
    <property type="protein sequence ID" value="KIS68513.1"/>
    <property type="molecule type" value="Genomic_DNA"/>
</dbReference>
<dbReference type="RefSeq" id="XP_011390025.1">
    <property type="nucleotide sequence ID" value="XM_011391723.1"/>
</dbReference>
<dbReference type="SMR" id="Q4P8G2"/>
<dbReference type="FunCoup" id="Q4P8G2">
    <property type="interactions" value="141"/>
</dbReference>
<dbReference type="STRING" id="237631.Q4P8G2"/>
<dbReference type="EnsemblFungi" id="KIS68513">
    <property type="protein sequence ID" value="KIS68513"/>
    <property type="gene ID" value="UMAG_03601"/>
</dbReference>
<dbReference type="GeneID" id="23564012"/>
<dbReference type="KEGG" id="uma:UMAG_03601"/>
<dbReference type="VEuPathDB" id="FungiDB:UMAG_03601"/>
<dbReference type="eggNOG" id="KOG2923">
    <property type="taxonomic scope" value="Eukaryota"/>
</dbReference>
<dbReference type="HOGENOM" id="CLU_155991_3_0_1"/>
<dbReference type="InParanoid" id="Q4P8G2"/>
<dbReference type="OMA" id="LFTYPCP"/>
<dbReference type="OrthoDB" id="66964at2759"/>
<dbReference type="UniPathway" id="UPA00559"/>
<dbReference type="Proteomes" id="UP000000561">
    <property type="component" value="Chromosome 9"/>
</dbReference>
<dbReference type="GO" id="GO:0005737">
    <property type="term" value="C:cytoplasm"/>
    <property type="evidence" value="ECO:0007669"/>
    <property type="project" value="UniProtKB-SubCell"/>
</dbReference>
<dbReference type="GO" id="GO:0005634">
    <property type="term" value="C:nucleus"/>
    <property type="evidence" value="ECO:0007669"/>
    <property type="project" value="UniProtKB-SubCell"/>
</dbReference>
<dbReference type="GO" id="GO:0008198">
    <property type="term" value="F:ferrous iron binding"/>
    <property type="evidence" value="ECO:0000250"/>
    <property type="project" value="UniProtKB"/>
</dbReference>
<dbReference type="GO" id="GO:0034986">
    <property type="term" value="F:iron chaperone activity"/>
    <property type="evidence" value="ECO:0000250"/>
    <property type="project" value="UniProtKB"/>
</dbReference>
<dbReference type="GO" id="GO:0016491">
    <property type="term" value="F:oxidoreductase activity"/>
    <property type="evidence" value="ECO:0007669"/>
    <property type="project" value="UniProtKB-KW"/>
</dbReference>
<dbReference type="GO" id="GO:0017183">
    <property type="term" value="P:protein histidyl modification to diphthamide"/>
    <property type="evidence" value="ECO:0000250"/>
    <property type="project" value="UniProtKB"/>
</dbReference>
<dbReference type="GO" id="GO:0002926">
    <property type="term" value="P:tRNA wobble base 5-methoxycarbonylmethyl-2-thiouridinylation"/>
    <property type="evidence" value="ECO:0000250"/>
    <property type="project" value="UniProtKB"/>
</dbReference>
<dbReference type="FunFam" id="3.10.660.10:FF:000001">
    <property type="entry name" value="Diphthamide biosynthesis 3"/>
    <property type="match status" value="1"/>
</dbReference>
<dbReference type="Gene3D" id="3.10.660.10">
    <property type="entry name" value="DPH Zinc finger"/>
    <property type="match status" value="1"/>
</dbReference>
<dbReference type="InterPro" id="IPR044248">
    <property type="entry name" value="DPH3/4-like"/>
</dbReference>
<dbReference type="InterPro" id="IPR007872">
    <property type="entry name" value="DPH_MB_dom"/>
</dbReference>
<dbReference type="InterPro" id="IPR036671">
    <property type="entry name" value="DPH_MB_sf"/>
</dbReference>
<dbReference type="PANTHER" id="PTHR21454:SF31">
    <property type="entry name" value="DIPHTHAMIDE BIOSYNTHESIS PROTEIN 3"/>
    <property type="match status" value="1"/>
</dbReference>
<dbReference type="PANTHER" id="PTHR21454">
    <property type="entry name" value="DPH3 HOMOLOG-RELATED"/>
    <property type="match status" value="1"/>
</dbReference>
<dbReference type="Pfam" id="PF05207">
    <property type="entry name" value="Zn_ribbon_CSL"/>
    <property type="match status" value="1"/>
</dbReference>
<dbReference type="SUPFAM" id="SSF144217">
    <property type="entry name" value="CSL zinc finger"/>
    <property type="match status" value="1"/>
</dbReference>
<dbReference type="PROSITE" id="PS51074">
    <property type="entry name" value="DPH_MB"/>
    <property type="match status" value="1"/>
</dbReference>
<organism>
    <name type="scientific">Mycosarcoma maydis</name>
    <name type="common">Corn smut fungus</name>
    <name type="synonym">Ustilago maydis</name>
    <dbReference type="NCBI Taxonomy" id="5270"/>
    <lineage>
        <taxon>Eukaryota</taxon>
        <taxon>Fungi</taxon>
        <taxon>Dikarya</taxon>
        <taxon>Basidiomycota</taxon>
        <taxon>Ustilaginomycotina</taxon>
        <taxon>Ustilaginomycetes</taxon>
        <taxon>Ustilaginales</taxon>
        <taxon>Ustilaginaceae</taxon>
        <taxon>Mycosarcoma</taxon>
    </lineage>
</organism>
<keyword id="KW-0963">Cytoplasm</keyword>
<keyword id="KW-0408">Iron</keyword>
<keyword id="KW-0479">Metal-binding</keyword>
<keyword id="KW-0539">Nucleus</keyword>
<keyword id="KW-0560">Oxidoreductase</keyword>
<keyword id="KW-1185">Reference proteome</keyword>
<evidence type="ECO:0000250" key="1"/>
<evidence type="ECO:0000250" key="2">
    <source>
        <dbReference type="UniProtKB" id="Q3E840"/>
    </source>
</evidence>
<evidence type="ECO:0000255" key="3">
    <source>
        <dbReference type="PROSITE-ProRule" id="PRU00456"/>
    </source>
</evidence>
<evidence type="ECO:0000305" key="4"/>
<comment type="function">
    <text evidence="2">Required for the first step of diphthamide biosynthesis, a post-translational modification of histidine which occurs in elongation factor 2. DPH1 and DPH2 transfer a 3-amino-3-carboxypropyl (ACP) group from S-adenosyl-L-methionine (SAM) to a histidine residue, the reaction is assisted by a reduction system comprising KTI11/DPH3 and a NADH-dependent reductase, predominantly CBR1. Acts as an electron donor to reduce the Fe-S cluster in DPH1-DPH2 keeping the [4Fe-4S] clusters in the active and reduced state. Restores iron to DPH1-DPH2 iron-sulfur clusters which have degraded from [4Fe-4S] to [3Fe-4S] by donating an iron atom to reform [4Fe-4S] clusters, in a manner dependent on the presence of elongation factor 2 and SAM. Associates with the elongator complex and is required for tRNA Wobble base modifications mediated by the elongator complex. The elongator complex is required for multiple tRNA modifications, including mcm5U (5-methoxycarbonylmethyl uridine), mcm5s 2U (5-methoxycarbonylmethyl-2-thiouridine), and ncm5U (5-carbamoylmethyl uridine).</text>
</comment>
<comment type="catalytic activity">
    <reaction evidence="2">
        <text>[3Fe-4S](1+)-[protein] + Fe(2+)-[Dph3] = [3Fe-4S](0)-[protein] + Fe(3+)-[Dph3]</text>
        <dbReference type="Rhea" id="RHEA:71235"/>
        <dbReference type="Rhea" id="RHEA-COMP:17996"/>
        <dbReference type="Rhea" id="RHEA-COMP:17997"/>
        <dbReference type="Rhea" id="RHEA-COMP:18002"/>
        <dbReference type="Rhea" id="RHEA-COMP:18003"/>
        <dbReference type="ChEBI" id="CHEBI:29033"/>
        <dbReference type="ChEBI" id="CHEBI:29034"/>
        <dbReference type="ChEBI" id="CHEBI:33751"/>
        <dbReference type="ChEBI" id="CHEBI:47402"/>
        <dbReference type="ChEBI" id="CHEBI:83228"/>
    </reaction>
</comment>
<comment type="catalytic activity">
    <reaction evidence="2">
        <text>2 [3Fe-4S](0)-[protein] + 2 Fe(2+)-[Dph3] + NADH = 2 [4Fe-4S](1+)-[protein] + 2 [Dph3] + NAD(+) + H(+)</text>
        <dbReference type="Rhea" id="RHEA:71239"/>
        <dbReference type="Rhea" id="RHEA-COMP:17997"/>
        <dbReference type="Rhea" id="RHEA-COMP:17998"/>
        <dbReference type="Rhea" id="RHEA-COMP:18001"/>
        <dbReference type="Rhea" id="RHEA-COMP:18002"/>
        <dbReference type="ChEBI" id="CHEBI:15378"/>
        <dbReference type="ChEBI" id="CHEBI:29033"/>
        <dbReference type="ChEBI" id="CHEBI:33723"/>
        <dbReference type="ChEBI" id="CHEBI:47402"/>
        <dbReference type="ChEBI" id="CHEBI:57540"/>
        <dbReference type="ChEBI" id="CHEBI:57945"/>
        <dbReference type="ChEBI" id="CHEBI:83228"/>
    </reaction>
</comment>
<comment type="cofactor">
    <cofactor evidence="2">
        <name>Fe(2+)</name>
        <dbReference type="ChEBI" id="CHEBI:29033"/>
    </cofactor>
</comment>
<comment type="pathway">
    <text evidence="2">Protein modification; peptidyl-diphthamide biosynthesis.</text>
</comment>
<comment type="subunit">
    <text evidence="2">Component of the 2-(3-amino-3-carboxypropyl)histidine synthase complex composed of DPH1, DPH2, DPH3 and a NADH-dependent reductase, predominantly CBR1.</text>
</comment>
<comment type="subcellular location">
    <subcellularLocation>
        <location evidence="1">Cytoplasm</location>
    </subcellularLocation>
    <subcellularLocation>
        <location evidence="1">Nucleus</location>
    </subcellularLocation>
</comment>
<comment type="domain">
    <text evidence="2">The DPH-type metal-binding (MB) domain can also bind zinc. However, iron is the physiological binding partner as zinc binding impairs the protein electron donor function.</text>
</comment>
<comment type="similarity">
    <text evidence="4">Belongs to the DPH3 family.</text>
</comment>
<feature type="chain" id="PRO_0000082637" description="Diphthamide biosynthesis protein 3">
    <location>
        <begin position="1"/>
        <end position="89"/>
    </location>
</feature>
<feature type="domain" description="DPH-type MB" evidence="3">
    <location>
        <begin position="5"/>
        <end position="61"/>
    </location>
</feature>
<feature type="binding site" evidence="2">
    <location>
        <position position="27"/>
    </location>
    <ligand>
        <name>Fe cation</name>
        <dbReference type="ChEBI" id="CHEBI:24875"/>
    </ligand>
</feature>
<feature type="binding site" evidence="2">
    <location>
        <position position="29"/>
    </location>
    <ligand>
        <name>Fe cation</name>
        <dbReference type="ChEBI" id="CHEBI:24875"/>
    </ligand>
</feature>
<feature type="binding site" evidence="2">
    <location>
        <position position="49"/>
    </location>
    <ligand>
        <name>Fe cation</name>
        <dbReference type="ChEBI" id="CHEBI:24875"/>
    </ligand>
</feature>
<feature type="binding site" evidence="2">
    <location>
        <position position="52"/>
    </location>
    <ligand>
        <name>Fe cation</name>
        <dbReference type="ChEBI" id="CHEBI:24875"/>
    </ligand>
</feature>
<reference key="1">
    <citation type="journal article" date="2006" name="Nature">
        <title>Insights from the genome of the biotrophic fungal plant pathogen Ustilago maydis.</title>
        <authorList>
            <person name="Kaemper J."/>
            <person name="Kahmann R."/>
            <person name="Boelker M."/>
            <person name="Ma L.-J."/>
            <person name="Brefort T."/>
            <person name="Saville B.J."/>
            <person name="Banuett F."/>
            <person name="Kronstad J.W."/>
            <person name="Gold S.E."/>
            <person name="Mueller O."/>
            <person name="Perlin M.H."/>
            <person name="Woesten H.A.B."/>
            <person name="de Vries R."/>
            <person name="Ruiz-Herrera J."/>
            <person name="Reynaga-Pena C.G."/>
            <person name="Snetselaar K."/>
            <person name="McCann M."/>
            <person name="Perez-Martin J."/>
            <person name="Feldbruegge M."/>
            <person name="Basse C.W."/>
            <person name="Steinberg G."/>
            <person name="Ibeas J.I."/>
            <person name="Holloman W."/>
            <person name="Guzman P."/>
            <person name="Farman M.L."/>
            <person name="Stajich J.E."/>
            <person name="Sentandreu R."/>
            <person name="Gonzalez-Prieto J.M."/>
            <person name="Kennell J.C."/>
            <person name="Molina L."/>
            <person name="Schirawski J."/>
            <person name="Mendoza-Mendoza A."/>
            <person name="Greilinger D."/>
            <person name="Muench K."/>
            <person name="Roessel N."/>
            <person name="Scherer M."/>
            <person name="Vranes M."/>
            <person name="Ladendorf O."/>
            <person name="Vincon V."/>
            <person name="Fuchs U."/>
            <person name="Sandrock B."/>
            <person name="Meng S."/>
            <person name="Ho E.C.H."/>
            <person name="Cahill M.J."/>
            <person name="Boyce K.J."/>
            <person name="Klose J."/>
            <person name="Klosterman S.J."/>
            <person name="Deelstra H.J."/>
            <person name="Ortiz-Castellanos L."/>
            <person name="Li W."/>
            <person name="Sanchez-Alonso P."/>
            <person name="Schreier P.H."/>
            <person name="Haeuser-Hahn I."/>
            <person name="Vaupel M."/>
            <person name="Koopmann E."/>
            <person name="Friedrich G."/>
            <person name="Voss H."/>
            <person name="Schlueter T."/>
            <person name="Margolis J."/>
            <person name="Platt D."/>
            <person name="Swimmer C."/>
            <person name="Gnirke A."/>
            <person name="Chen F."/>
            <person name="Vysotskaia V."/>
            <person name="Mannhaupt G."/>
            <person name="Gueldener U."/>
            <person name="Muensterkoetter M."/>
            <person name="Haase D."/>
            <person name="Oesterheld M."/>
            <person name="Mewes H.-W."/>
            <person name="Mauceli E.W."/>
            <person name="DeCaprio D."/>
            <person name="Wade C.M."/>
            <person name="Butler J."/>
            <person name="Young S.K."/>
            <person name="Jaffe D.B."/>
            <person name="Calvo S.E."/>
            <person name="Nusbaum C."/>
            <person name="Galagan J.E."/>
            <person name="Birren B.W."/>
        </authorList>
    </citation>
    <scope>NUCLEOTIDE SEQUENCE [LARGE SCALE GENOMIC DNA]</scope>
    <source>
        <strain>DSM 14603 / FGSC 9021 / UM521</strain>
    </source>
</reference>
<reference key="2">
    <citation type="submission" date="2014-09" db="EMBL/GenBank/DDBJ databases">
        <authorList>
            <person name="Gueldener U."/>
            <person name="Muensterkoetter M."/>
            <person name="Walter M.C."/>
            <person name="Mannhaupt G."/>
            <person name="Kahmann R."/>
        </authorList>
    </citation>
    <scope>GENOME REANNOTATION</scope>
    <source>
        <strain>DSM 14603 / FGSC 9021 / UM521</strain>
    </source>
</reference>
<sequence>MPVSFYDEIELEDMSYDDEKDVFHYPCPCGDRFEITRQQLKDAEDVARCPSCSLIIRVVFDPIDFEDGDEDEAPVNTIDVASQAVAAAA</sequence>